<sequence>MVKTQRVVITPGEPAGIGPDLVVQLAQREWPVELVVCADATLLTDRAAMLGLPLTLRPYSPNSPAQPQTTGTLTLLPVALRESVTAGQLAIENGHYVVETLARACDGCLNGEFAALITGPVHKGVINDASIPFTGHTEFFEERSQAKKVVMMLATEELRVALATTHLPLRDIADAITPALLHEVIAILHHDLRTKFGIAEPRILVCGLNPHAGEGGHMGTEEIDTIIPVLDELRAQGMKLNGPLPADTLFQPKYLDNADAVLAMYHDQGLPVLKYQGFGRGVNITLGLPFIRTSVDHGTALELAGRGEADVGSFITALNLAIKMIVNTQ</sequence>
<organism>
    <name type="scientific">Shigella flexneri</name>
    <dbReference type="NCBI Taxonomy" id="623"/>
    <lineage>
        <taxon>Bacteria</taxon>
        <taxon>Pseudomonadati</taxon>
        <taxon>Pseudomonadota</taxon>
        <taxon>Gammaproteobacteria</taxon>
        <taxon>Enterobacterales</taxon>
        <taxon>Enterobacteriaceae</taxon>
        <taxon>Shigella</taxon>
    </lineage>
</organism>
<name>PDXA_SHIFL</name>
<evidence type="ECO:0000255" key="1">
    <source>
        <dbReference type="HAMAP-Rule" id="MF_00536"/>
    </source>
</evidence>
<gene>
    <name evidence="1" type="primary">pdxA</name>
    <name type="ordered locus">SF0049</name>
    <name type="ordered locus">S0051</name>
</gene>
<comment type="function">
    <text evidence="1">Catalyzes the NAD(P)-dependent oxidation of 4-(phosphooxy)-L-threonine (HTP) into 2-amino-3-oxo-4-(phosphooxy)butyric acid which spontaneously decarboxylates to form 3-amino-2-oxopropyl phosphate (AHAP).</text>
</comment>
<comment type="catalytic activity">
    <reaction evidence="1">
        <text>4-(phosphooxy)-L-threonine + NAD(+) = 3-amino-2-oxopropyl phosphate + CO2 + NADH</text>
        <dbReference type="Rhea" id="RHEA:32275"/>
        <dbReference type="ChEBI" id="CHEBI:16526"/>
        <dbReference type="ChEBI" id="CHEBI:57279"/>
        <dbReference type="ChEBI" id="CHEBI:57540"/>
        <dbReference type="ChEBI" id="CHEBI:57945"/>
        <dbReference type="ChEBI" id="CHEBI:58452"/>
        <dbReference type="EC" id="1.1.1.262"/>
    </reaction>
</comment>
<comment type="cofactor">
    <cofactor evidence="1">
        <name>Zn(2+)</name>
        <dbReference type="ChEBI" id="CHEBI:29105"/>
    </cofactor>
    <cofactor evidence="1">
        <name>Mg(2+)</name>
        <dbReference type="ChEBI" id="CHEBI:18420"/>
    </cofactor>
    <cofactor evidence="1">
        <name>Co(2+)</name>
        <dbReference type="ChEBI" id="CHEBI:48828"/>
    </cofactor>
    <text evidence="1">Binds 1 divalent metal cation per subunit. Can use ions such as Zn(2+), Mg(2+) or Co(2+).</text>
</comment>
<comment type="pathway">
    <text evidence="1">Cofactor biosynthesis; pyridoxine 5'-phosphate biosynthesis; pyridoxine 5'-phosphate from D-erythrose 4-phosphate: step 4/5.</text>
</comment>
<comment type="subunit">
    <text evidence="1">Homodimer.</text>
</comment>
<comment type="subcellular location">
    <subcellularLocation>
        <location evidence="1">Cytoplasm</location>
    </subcellularLocation>
</comment>
<comment type="miscellaneous">
    <text evidence="1">The active site is located at the dimer interface.</text>
</comment>
<comment type="similarity">
    <text evidence="1">Belongs to the PdxA family.</text>
</comment>
<feature type="chain" id="PRO_1000051517" description="4-hydroxythreonine-4-phosphate dehydrogenase">
    <location>
        <begin position="1"/>
        <end position="329"/>
    </location>
</feature>
<feature type="binding site" evidence="1">
    <location>
        <position position="136"/>
    </location>
    <ligand>
        <name>substrate</name>
    </ligand>
</feature>
<feature type="binding site" evidence="1">
    <location>
        <position position="137"/>
    </location>
    <ligand>
        <name>substrate</name>
    </ligand>
</feature>
<feature type="binding site" evidence="1">
    <location>
        <position position="166"/>
    </location>
    <ligand>
        <name>a divalent metal cation</name>
        <dbReference type="ChEBI" id="CHEBI:60240"/>
        <note>ligand shared between dimeric partners</note>
    </ligand>
</feature>
<feature type="binding site" evidence="1">
    <location>
        <position position="211"/>
    </location>
    <ligand>
        <name>a divalent metal cation</name>
        <dbReference type="ChEBI" id="CHEBI:60240"/>
        <note>ligand shared between dimeric partners</note>
    </ligand>
</feature>
<feature type="binding site" evidence="1">
    <location>
        <position position="266"/>
    </location>
    <ligand>
        <name>a divalent metal cation</name>
        <dbReference type="ChEBI" id="CHEBI:60240"/>
        <note>ligand shared between dimeric partners</note>
    </ligand>
</feature>
<feature type="binding site" evidence="1">
    <location>
        <position position="274"/>
    </location>
    <ligand>
        <name>substrate</name>
    </ligand>
</feature>
<feature type="binding site" evidence="1">
    <location>
        <position position="283"/>
    </location>
    <ligand>
        <name>substrate</name>
    </ligand>
</feature>
<feature type="binding site" evidence="1">
    <location>
        <position position="292"/>
    </location>
    <ligand>
        <name>substrate</name>
    </ligand>
</feature>
<dbReference type="EC" id="1.1.1.262" evidence="1"/>
<dbReference type="EMBL" id="AE005674">
    <property type="protein sequence ID" value="AAN41715.1"/>
    <property type="molecule type" value="Genomic_DNA"/>
</dbReference>
<dbReference type="EMBL" id="AE014073">
    <property type="protein sequence ID" value="AAP15595.1"/>
    <property type="molecule type" value="Genomic_DNA"/>
</dbReference>
<dbReference type="RefSeq" id="NP_706008.1">
    <property type="nucleotide sequence ID" value="NC_004337.2"/>
</dbReference>
<dbReference type="RefSeq" id="WP_000241261.1">
    <property type="nucleotide sequence ID" value="NZ_WPGW01000005.1"/>
</dbReference>
<dbReference type="SMR" id="Q83SQ1"/>
<dbReference type="STRING" id="198214.SF0049"/>
<dbReference type="PaxDb" id="198214-SF0049"/>
<dbReference type="GeneID" id="1024548"/>
<dbReference type="KEGG" id="sfl:SF0049"/>
<dbReference type="KEGG" id="sfx:S0051"/>
<dbReference type="PATRIC" id="fig|198214.7.peg.58"/>
<dbReference type="HOGENOM" id="CLU_040168_1_0_6"/>
<dbReference type="UniPathway" id="UPA00244">
    <property type="reaction ID" value="UER00312"/>
</dbReference>
<dbReference type="Proteomes" id="UP000001006">
    <property type="component" value="Chromosome"/>
</dbReference>
<dbReference type="Proteomes" id="UP000002673">
    <property type="component" value="Chromosome"/>
</dbReference>
<dbReference type="GO" id="GO:0005737">
    <property type="term" value="C:cytoplasm"/>
    <property type="evidence" value="ECO:0007669"/>
    <property type="project" value="UniProtKB-SubCell"/>
</dbReference>
<dbReference type="GO" id="GO:0050570">
    <property type="term" value="F:4-hydroxythreonine-4-phosphate dehydrogenase activity"/>
    <property type="evidence" value="ECO:0007669"/>
    <property type="project" value="UniProtKB-UniRule"/>
</dbReference>
<dbReference type="GO" id="GO:0050897">
    <property type="term" value="F:cobalt ion binding"/>
    <property type="evidence" value="ECO:0007669"/>
    <property type="project" value="UniProtKB-UniRule"/>
</dbReference>
<dbReference type="GO" id="GO:0000287">
    <property type="term" value="F:magnesium ion binding"/>
    <property type="evidence" value="ECO:0007669"/>
    <property type="project" value="UniProtKB-UniRule"/>
</dbReference>
<dbReference type="GO" id="GO:0051287">
    <property type="term" value="F:NAD binding"/>
    <property type="evidence" value="ECO:0007669"/>
    <property type="project" value="InterPro"/>
</dbReference>
<dbReference type="GO" id="GO:0008270">
    <property type="term" value="F:zinc ion binding"/>
    <property type="evidence" value="ECO:0007669"/>
    <property type="project" value="UniProtKB-UniRule"/>
</dbReference>
<dbReference type="GO" id="GO:0042823">
    <property type="term" value="P:pyridoxal phosphate biosynthetic process"/>
    <property type="evidence" value="ECO:0007669"/>
    <property type="project" value="UniProtKB-UniRule"/>
</dbReference>
<dbReference type="GO" id="GO:0008615">
    <property type="term" value="P:pyridoxine biosynthetic process"/>
    <property type="evidence" value="ECO:0007669"/>
    <property type="project" value="UniProtKB-UniRule"/>
</dbReference>
<dbReference type="FunFam" id="3.40.718.10:FF:000010">
    <property type="entry name" value="4-hydroxythreonine-4-phosphate dehydrogenase"/>
    <property type="match status" value="1"/>
</dbReference>
<dbReference type="Gene3D" id="3.40.718.10">
    <property type="entry name" value="Isopropylmalate Dehydrogenase"/>
    <property type="match status" value="1"/>
</dbReference>
<dbReference type="HAMAP" id="MF_00536">
    <property type="entry name" value="PdxA"/>
    <property type="match status" value="1"/>
</dbReference>
<dbReference type="InterPro" id="IPR037510">
    <property type="entry name" value="PdxA"/>
</dbReference>
<dbReference type="InterPro" id="IPR005255">
    <property type="entry name" value="PdxA_fam"/>
</dbReference>
<dbReference type="NCBIfam" id="TIGR00557">
    <property type="entry name" value="pdxA"/>
    <property type="match status" value="1"/>
</dbReference>
<dbReference type="PANTHER" id="PTHR30004">
    <property type="entry name" value="4-HYDROXYTHREONINE-4-PHOSPHATE DEHYDROGENASE"/>
    <property type="match status" value="1"/>
</dbReference>
<dbReference type="PANTHER" id="PTHR30004:SF5">
    <property type="entry name" value="4-HYDROXYTHREONINE-4-PHOSPHATE DEHYDROGENASE"/>
    <property type="match status" value="1"/>
</dbReference>
<dbReference type="Pfam" id="PF04166">
    <property type="entry name" value="PdxA"/>
    <property type="match status" value="1"/>
</dbReference>
<dbReference type="SUPFAM" id="SSF53659">
    <property type="entry name" value="Isocitrate/Isopropylmalate dehydrogenase-like"/>
    <property type="match status" value="1"/>
</dbReference>
<keyword id="KW-0170">Cobalt</keyword>
<keyword id="KW-0963">Cytoplasm</keyword>
<keyword id="KW-0460">Magnesium</keyword>
<keyword id="KW-0479">Metal-binding</keyword>
<keyword id="KW-0520">NAD</keyword>
<keyword id="KW-0521">NADP</keyword>
<keyword id="KW-0560">Oxidoreductase</keyword>
<keyword id="KW-0664">Pyridoxine biosynthesis</keyword>
<keyword id="KW-1185">Reference proteome</keyword>
<keyword id="KW-0862">Zinc</keyword>
<reference key="1">
    <citation type="journal article" date="2002" name="Nucleic Acids Res.">
        <title>Genome sequence of Shigella flexneri 2a: insights into pathogenicity through comparison with genomes of Escherichia coli K12 and O157.</title>
        <authorList>
            <person name="Jin Q."/>
            <person name="Yuan Z."/>
            <person name="Xu J."/>
            <person name="Wang Y."/>
            <person name="Shen Y."/>
            <person name="Lu W."/>
            <person name="Wang J."/>
            <person name="Liu H."/>
            <person name="Yang J."/>
            <person name="Yang F."/>
            <person name="Zhang X."/>
            <person name="Zhang J."/>
            <person name="Yang G."/>
            <person name="Wu H."/>
            <person name="Qu D."/>
            <person name="Dong J."/>
            <person name="Sun L."/>
            <person name="Xue Y."/>
            <person name="Zhao A."/>
            <person name="Gao Y."/>
            <person name="Zhu J."/>
            <person name="Kan B."/>
            <person name="Ding K."/>
            <person name="Chen S."/>
            <person name="Cheng H."/>
            <person name="Yao Z."/>
            <person name="He B."/>
            <person name="Chen R."/>
            <person name="Ma D."/>
            <person name="Qiang B."/>
            <person name="Wen Y."/>
            <person name="Hou Y."/>
            <person name="Yu J."/>
        </authorList>
    </citation>
    <scope>NUCLEOTIDE SEQUENCE [LARGE SCALE GENOMIC DNA]</scope>
    <source>
        <strain>301 / Serotype 2a</strain>
    </source>
</reference>
<reference key="2">
    <citation type="journal article" date="2003" name="Infect. Immun.">
        <title>Complete genome sequence and comparative genomics of Shigella flexneri serotype 2a strain 2457T.</title>
        <authorList>
            <person name="Wei J."/>
            <person name="Goldberg M.B."/>
            <person name="Burland V."/>
            <person name="Venkatesan M.M."/>
            <person name="Deng W."/>
            <person name="Fournier G."/>
            <person name="Mayhew G.F."/>
            <person name="Plunkett G. III"/>
            <person name="Rose D.J."/>
            <person name="Darling A."/>
            <person name="Mau B."/>
            <person name="Perna N.T."/>
            <person name="Payne S.M."/>
            <person name="Runyen-Janecky L.J."/>
            <person name="Zhou S."/>
            <person name="Schwartz D.C."/>
            <person name="Blattner F.R."/>
        </authorList>
    </citation>
    <scope>NUCLEOTIDE SEQUENCE [LARGE SCALE GENOMIC DNA]</scope>
    <source>
        <strain>ATCC 700930 / 2457T / Serotype 2a</strain>
    </source>
</reference>
<protein>
    <recommendedName>
        <fullName evidence="1">4-hydroxythreonine-4-phosphate dehydrogenase</fullName>
        <ecNumber evidence="1">1.1.1.262</ecNumber>
    </recommendedName>
    <alternativeName>
        <fullName evidence="1">4-(phosphohydroxy)-L-threonine dehydrogenase</fullName>
    </alternativeName>
</protein>
<accession>Q83SQ1</accession>
<proteinExistence type="inferred from homology"/>